<keyword id="KW-0938">Abscisic acid signaling pathway</keyword>
<keyword id="KW-0496">Mitochondrion</keyword>
<keyword id="KW-0560">Oxidoreductase</keyword>
<keyword id="KW-0575">Peroxidase</keyword>
<keyword id="KW-1185">Reference proteome</keyword>
<keyword id="KW-0346">Stress response</keyword>
<keyword id="KW-0809">Transit peptide</keyword>
<dbReference type="EC" id="1.11.1.9"/>
<dbReference type="EMBL" id="AC002335">
    <property type="protein sequence ID" value="AAB64335.1"/>
    <property type="molecule type" value="Genomic_DNA"/>
</dbReference>
<dbReference type="EMBL" id="CP002685">
    <property type="protein sequence ID" value="AEC10254.1"/>
    <property type="molecule type" value="Genomic_DNA"/>
</dbReference>
<dbReference type="EMBL" id="CP002685">
    <property type="protein sequence ID" value="AEC10255.1"/>
    <property type="molecule type" value="Genomic_DNA"/>
</dbReference>
<dbReference type="EMBL" id="AY065372">
    <property type="protein sequence ID" value="AAL38813.1"/>
    <property type="molecule type" value="mRNA"/>
</dbReference>
<dbReference type="EMBL" id="AY096479">
    <property type="protein sequence ID" value="AAM20119.1"/>
    <property type="molecule type" value="mRNA"/>
</dbReference>
<dbReference type="EMBL" id="AY087030">
    <property type="protein sequence ID" value="AAM64591.1"/>
    <property type="molecule type" value="mRNA"/>
</dbReference>
<dbReference type="PIR" id="A84865">
    <property type="entry name" value="A84865"/>
</dbReference>
<dbReference type="RefSeq" id="NP_001189742.1">
    <property type="nucleotide sequence ID" value="NM_001202813.1"/>
</dbReference>
<dbReference type="RefSeq" id="NP_181863.1">
    <property type="nucleotide sequence ID" value="NM_129896.4"/>
</dbReference>
<dbReference type="SMR" id="O22850"/>
<dbReference type="BioGRID" id="4273">
    <property type="interactions" value="3"/>
</dbReference>
<dbReference type="FunCoup" id="O22850">
    <property type="interactions" value="2567"/>
</dbReference>
<dbReference type="STRING" id="3702.O22850"/>
<dbReference type="PeroxiBase" id="2501">
    <property type="entry name" value="AtGPx03"/>
</dbReference>
<dbReference type="SwissPalm" id="O22850"/>
<dbReference type="PaxDb" id="3702-AT2G43350.2"/>
<dbReference type="ProteomicsDB" id="220706"/>
<dbReference type="EnsemblPlants" id="AT2G43350.1">
    <property type="protein sequence ID" value="AT2G43350.1"/>
    <property type="gene ID" value="AT2G43350"/>
</dbReference>
<dbReference type="EnsemblPlants" id="AT2G43350.2">
    <property type="protein sequence ID" value="AT2G43350.2"/>
    <property type="gene ID" value="AT2G43350"/>
</dbReference>
<dbReference type="GeneID" id="818936"/>
<dbReference type="Gramene" id="AT2G43350.1">
    <property type="protein sequence ID" value="AT2G43350.1"/>
    <property type="gene ID" value="AT2G43350"/>
</dbReference>
<dbReference type="Gramene" id="AT2G43350.2">
    <property type="protein sequence ID" value="AT2G43350.2"/>
    <property type="gene ID" value="AT2G43350"/>
</dbReference>
<dbReference type="KEGG" id="ath:AT2G43350"/>
<dbReference type="Araport" id="AT2G43350"/>
<dbReference type="TAIR" id="AT2G43350">
    <property type="gene designation" value="GPX3"/>
</dbReference>
<dbReference type="eggNOG" id="KOG1651">
    <property type="taxonomic scope" value="Eukaryota"/>
</dbReference>
<dbReference type="HOGENOM" id="CLU_029507_0_1_1"/>
<dbReference type="InParanoid" id="O22850"/>
<dbReference type="OMA" id="MNILYAK"/>
<dbReference type="OrthoDB" id="446890at2759"/>
<dbReference type="PhylomeDB" id="O22850"/>
<dbReference type="BioCyc" id="ARA:AT2G43350-MONOMER"/>
<dbReference type="BRENDA" id="1.11.1.9">
    <property type="organism ID" value="399"/>
</dbReference>
<dbReference type="PRO" id="PR:O22850"/>
<dbReference type="Proteomes" id="UP000006548">
    <property type="component" value="Chromosome 2"/>
</dbReference>
<dbReference type="ExpressionAtlas" id="O22850">
    <property type="expression patterns" value="baseline and differential"/>
</dbReference>
<dbReference type="GO" id="GO:0005829">
    <property type="term" value="C:cytosol"/>
    <property type="evidence" value="ECO:0007005"/>
    <property type="project" value="TAIR"/>
</dbReference>
<dbReference type="GO" id="GO:0005783">
    <property type="term" value="C:endoplasmic reticulum"/>
    <property type="evidence" value="ECO:0000314"/>
    <property type="project" value="TAIR"/>
</dbReference>
<dbReference type="GO" id="GO:0005768">
    <property type="term" value="C:endosome"/>
    <property type="evidence" value="ECO:0007005"/>
    <property type="project" value="TAIR"/>
</dbReference>
<dbReference type="GO" id="GO:0005794">
    <property type="term" value="C:Golgi apparatus"/>
    <property type="evidence" value="ECO:0000314"/>
    <property type="project" value="TAIR"/>
</dbReference>
<dbReference type="GO" id="GO:0005739">
    <property type="term" value="C:mitochondrion"/>
    <property type="evidence" value="ECO:0000250"/>
    <property type="project" value="TAIR"/>
</dbReference>
<dbReference type="GO" id="GO:0005802">
    <property type="term" value="C:trans-Golgi network"/>
    <property type="evidence" value="ECO:0007005"/>
    <property type="project" value="TAIR"/>
</dbReference>
<dbReference type="GO" id="GO:0004602">
    <property type="term" value="F:glutathione peroxidase activity"/>
    <property type="evidence" value="ECO:0007669"/>
    <property type="project" value="UniProtKB-EC"/>
</dbReference>
<dbReference type="GO" id="GO:0009738">
    <property type="term" value="P:abscisic acid-activated signaling pathway"/>
    <property type="evidence" value="ECO:0000315"/>
    <property type="project" value="TAIR"/>
</dbReference>
<dbReference type="GO" id="GO:0042631">
    <property type="term" value="P:cellular response to water deprivation"/>
    <property type="evidence" value="ECO:0000315"/>
    <property type="project" value="TAIR"/>
</dbReference>
<dbReference type="GO" id="GO:0042542">
    <property type="term" value="P:response to hydrogen peroxide"/>
    <property type="evidence" value="ECO:0000315"/>
    <property type="project" value="TAIR"/>
</dbReference>
<dbReference type="CDD" id="cd00340">
    <property type="entry name" value="GSH_Peroxidase"/>
    <property type="match status" value="1"/>
</dbReference>
<dbReference type="FunFam" id="3.40.30.10:FF:000025">
    <property type="entry name" value="Glutathione peroxidase"/>
    <property type="match status" value="1"/>
</dbReference>
<dbReference type="Gene3D" id="3.40.30.10">
    <property type="entry name" value="Glutaredoxin"/>
    <property type="match status" value="1"/>
</dbReference>
<dbReference type="InterPro" id="IPR000889">
    <property type="entry name" value="Glutathione_peroxidase"/>
</dbReference>
<dbReference type="InterPro" id="IPR029759">
    <property type="entry name" value="GPX_AS"/>
</dbReference>
<dbReference type="InterPro" id="IPR029760">
    <property type="entry name" value="GPX_CS"/>
</dbReference>
<dbReference type="InterPro" id="IPR036249">
    <property type="entry name" value="Thioredoxin-like_sf"/>
</dbReference>
<dbReference type="InterPro" id="IPR013766">
    <property type="entry name" value="Thioredoxin_domain"/>
</dbReference>
<dbReference type="PANTHER" id="PTHR11592">
    <property type="entry name" value="GLUTATHIONE PEROXIDASE"/>
    <property type="match status" value="1"/>
</dbReference>
<dbReference type="PANTHER" id="PTHR11592:SF119">
    <property type="entry name" value="GLUTATHIONE PEROXIDASE 3, MITOCHONDRIAL-RELATED"/>
    <property type="match status" value="1"/>
</dbReference>
<dbReference type="Pfam" id="PF00255">
    <property type="entry name" value="GSHPx"/>
    <property type="match status" value="1"/>
</dbReference>
<dbReference type="PRINTS" id="PR01011">
    <property type="entry name" value="GLUTPROXDASE"/>
</dbReference>
<dbReference type="SUPFAM" id="SSF52833">
    <property type="entry name" value="Thioredoxin-like"/>
    <property type="match status" value="1"/>
</dbReference>
<dbReference type="PROSITE" id="PS00460">
    <property type="entry name" value="GLUTATHIONE_PEROXID_1"/>
    <property type="match status" value="1"/>
</dbReference>
<dbReference type="PROSITE" id="PS00763">
    <property type="entry name" value="GLUTATHIONE_PEROXID_2"/>
    <property type="match status" value="1"/>
</dbReference>
<dbReference type="PROSITE" id="PS51355">
    <property type="entry name" value="GLUTATHIONE_PEROXID_3"/>
    <property type="match status" value="1"/>
</dbReference>
<evidence type="ECO:0000250" key="1"/>
<evidence type="ECO:0000255" key="2"/>
<evidence type="ECO:0000269" key="3">
    <source>
    </source>
</evidence>
<evidence type="ECO:0000269" key="4">
    <source>
    </source>
</evidence>
<evidence type="ECO:0000305" key="5"/>
<sequence length="206" mass="23258">MPRSSRWVNQRATSKIKKFILFLGVAFVFYLYRYPSSPSTVEQSSTSIYNISVKDIEGKDVSLSKFTGKVLLIVNVASKCGLTHGNYKEMNILYAKYKTQGFEILAFPCNQFGSQEPGSNMEIKETVCNIFKAEFPIFDKIEVNGKNTCPLYNFLKEQKGGLFGDAIKWNFAKFLVDRQGNVVDRYAPTTSPLEIEKDIVKLLASA</sequence>
<proteinExistence type="evidence at protein level"/>
<gene>
    <name type="primary">GPX3</name>
    <name type="ordered locus">At2g43350</name>
    <name type="ORF">T1O24.9</name>
</gene>
<feature type="transit peptide" description="Mitochondrion" evidence="2">
    <location>
        <begin position="1"/>
        <end position="12"/>
    </location>
</feature>
<feature type="chain" id="PRO_0000045458" description="Probable glutathione peroxidase 3, mitochondrial">
    <location>
        <begin position="13"/>
        <end position="206"/>
    </location>
</feature>
<feature type="active site" evidence="1">
    <location>
        <position position="80"/>
    </location>
</feature>
<comment type="function">
    <text evidence="4">May constitute a glutathione peroxidase-like protective system against oxidative stresses. Involved positively in abscisic acid (ABA) signaling pathway that regulates numerous ABA responses, such as stomatal closure, seed germination and inhibition of vegetative growth. Oxidizes and represses target proteins (e.g. the phosphatase activity of ABI1 and ABI2) when oxidized by H(2)O(2), probably after ABA signaling. Modulates the calcium channel activity in guard cells in response to ABA or H(2)O(2). Confers tolerance to drought stress, by enhancing the ABA-dependent stomatal closure.</text>
</comment>
<comment type="catalytic activity">
    <reaction>
        <text>2 glutathione + H2O2 = glutathione disulfide + 2 H2O</text>
        <dbReference type="Rhea" id="RHEA:16833"/>
        <dbReference type="ChEBI" id="CHEBI:15377"/>
        <dbReference type="ChEBI" id="CHEBI:16240"/>
        <dbReference type="ChEBI" id="CHEBI:57925"/>
        <dbReference type="ChEBI" id="CHEBI:58297"/>
        <dbReference type="EC" id="1.11.1.9"/>
    </reaction>
</comment>
<comment type="activity regulation">
    <text evidence="4">The redox states are modulated by H(2)O(2).</text>
</comment>
<comment type="subunit">
    <text evidence="4">Interacts with ABI1 and ABI2.</text>
</comment>
<comment type="subcellular location">
    <subcellularLocation>
        <location evidence="5">Mitochondrion</location>
    </subcellularLocation>
</comment>
<comment type="tissue specificity">
    <text evidence="3">Ubiquitous.</text>
</comment>
<comment type="induction">
    <text evidence="3 4">By osmotic stress, H(2)O(2), drought stress, and metals. Regulated by abscisic acid (ABA); down-regulated by 1 mM ABA (PubMed:14617062), whereas induced by 60 uM ABA (PubMed:16998070).</text>
</comment>
<comment type="disruption phenotype">
    <text evidence="4">Leaves of plants lacking GPX3 are 1 degree Celsius lower than normal plants, whereas leaves from plants over-expressing GPX3 are 1.2 degrees Celsius higher, probably because of the impaired evapotranspiration.</text>
</comment>
<comment type="miscellaneous">
    <text>The reduced form of ABI2 is converted to the oxidized form by the addition of oxidized GPX3.</text>
</comment>
<comment type="similarity">
    <text evidence="5">Belongs to the glutathione peroxidase family.</text>
</comment>
<name>GPX3_ARATH</name>
<reference key="1">
    <citation type="journal article" date="1999" name="Nature">
        <title>Sequence and analysis of chromosome 2 of the plant Arabidopsis thaliana.</title>
        <authorList>
            <person name="Lin X."/>
            <person name="Kaul S."/>
            <person name="Rounsley S.D."/>
            <person name="Shea T.P."/>
            <person name="Benito M.-I."/>
            <person name="Town C.D."/>
            <person name="Fujii C.Y."/>
            <person name="Mason T.M."/>
            <person name="Bowman C.L."/>
            <person name="Barnstead M.E."/>
            <person name="Feldblyum T.V."/>
            <person name="Buell C.R."/>
            <person name="Ketchum K.A."/>
            <person name="Lee J.J."/>
            <person name="Ronning C.M."/>
            <person name="Koo H.L."/>
            <person name="Moffat K.S."/>
            <person name="Cronin L.A."/>
            <person name="Shen M."/>
            <person name="Pai G."/>
            <person name="Van Aken S."/>
            <person name="Umayam L."/>
            <person name="Tallon L.J."/>
            <person name="Gill J.E."/>
            <person name="Adams M.D."/>
            <person name="Carrera A.J."/>
            <person name="Creasy T.H."/>
            <person name="Goodman H.M."/>
            <person name="Somerville C.R."/>
            <person name="Copenhaver G.P."/>
            <person name="Preuss D."/>
            <person name="Nierman W.C."/>
            <person name="White O."/>
            <person name="Eisen J.A."/>
            <person name="Salzberg S.L."/>
            <person name="Fraser C.M."/>
            <person name="Venter J.C."/>
        </authorList>
    </citation>
    <scope>NUCLEOTIDE SEQUENCE [LARGE SCALE GENOMIC DNA]</scope>
    <source>
        <strain>cv. Columbia</strain>
    </source>
</reference>
<reference key="2">
    <citation type="journal article" date="2017" name="Plant J.">
        <title>Araport11: a complete reannotation of the Arabidopsis thaliana reference genome.</title>
        <authorList>
            <person name="Cheng C.Y."/>
            <person name="Krishnakumar V."/>
            <person name="Chan A.P."/>
            <person name="Thibaud-Nissen F."/>
            <person name="Schobel S."/>
            <person name="Town C.D."/>
        </authorList>
    </citation>
    <scope>GENOME REANNOTATION</scope>
    <source>
        <strain>cv. Columbia</strain>
    </source>
</reference>
<reference key="3">
    <citation type="journal article" date="2003" name="Science">
        <title>Empirical analysis of transcriptional activity in the Arabidopsis genome.</title>
        <authorList>
            <person name="Yamada K."/>
            <person name="Lim J."/>
            <person name="Dale J.M."/>
            <person name="Chen H."/>
            <person name="Shinn P."/>
            <person name="Palm C.J."/>
            <person name="Southwick A.M."/>
            <person name="Wu H.C."/>
            <person name="Kim C.J."/>
            <person name="Nguyen M."/>
            <person name="Pham P.K."/>
            <person name="Cheuk R.F."/>
            <person name="Karlin-Newmann G."/>
            <person name="Liu S.X."/>
            <person name="Lam B."/>
            <person name="Sakano H."/>
            <person name="Wu T."/>
            <person name="Yu G."/>
            <person name="Miranda M."/>
            <person name="Quach H.L."/>
            <person name="Tripp M."/>
            <person name="Chang C.H."/>
            <person name="Lee J.M."/>
            <person name="Toriumi M.J."/>
            <person name="Chan M.M."/>
            <person name="Tang C.C."/>
            <person name="Onodera C.S."/>
            <person name="Deng J.M."/>
            <person name="Akiyama K."/>
            <person name="Ansari Y."/>
            <person name="Arakawa T."/>
            <person name="Banh J."/>
            <person name="Banno F."/>
            <person name="Bowser L."/>
            <person name="Brooks S.Y."/>
            <person name="Carninci P."/>
            <person name="Chao Q."/>
            <person name="Choy N."/>
            <person name="Enju A."/>
            <person name="Goldsmith A.D."/>
            <person name="Gurjal M."/>
            <person name="Hansen N.F."/>
            <person name="Hayashizaki Y."/>
            <person name="Johnson-Hopson C."/>
            <person name="Hsuan V.W."/>
            <person name="Iida K."/>
            <person name="Karnes M."/>
            <person name="Khan S."/>
            <person name="Koesema E."/>
            <person name="Ishida J."/>
            <person name="Jiang P.X."/>
            <person name="Jones T."/>
            <person name="Kawai J."/>
            <person name="Kamiya A."/>
            <person name="Meyers C."/>
            <person name="Nakajima M."/>
            <person name="Narusaka M."/>
            <person name="Seki M."/>
            <person name="Sakurai T."/>
            <person name="Satou M."/>
            <person name="Tamse R."/>
            <person name="Vaysberg M."/>
            <person name="Wallender E.K."/>
            <person name="Wong C."/>
            <person name="Yamamura Y."/>
            <person name="Yuan S."/>
            <person name="Shinozaki K."/>
            <person name="Davis R.W."/>
            <person name="Theologis A."/>
            <person name="Ecker J.R."/>
        </authorList>
    </citation>
    <scope>NUCLEOTIDE SEQUENCE [LARGE SCALE MRNA]</scope>
    <source>
        <strain>cv. Columbia</strain>
    </source>
</reference>
<reference key="4">
    <citation type="submission" date="2002-03" db="EMBL/GenBank/DDBJ databases">
        <title>Full-length cDNA from Arabidopsis thaliana.</title>
        <authorList>
            <person name="Brover V.V."/>
            <person name="Troukhan M.E."/>
            <person name="Alexandrov N.A."/>
            <person name="Lu Y.-P."/>
            <person name="Flavell R.B."/>
            <person name="Feldmann K.A."/>
        </authorList>
    </citation>
    <scope>NUCLEOTIDE SEQUENCE [LARGE SCALE MRNA]</scope>
</reference>
<reference key="5">
    <citation type="journal article" date="2003" name="Plant J.">
        <title>Glutathione peroxidase genes in Arabidopsis are ubiquitous and regulated by abiotic stresses through diverse signaling pathways.</title>
        <authorList>
            <person name="Rodriguez Milla M.A."/>
            <person name="Maurer A."/>
            <person name="Rodriguez Huete A."/>
            <person name="Gustafson J.P."/>
        </authorList>
    </citation>
    <scope>GENE FAMILY</scope>
    <scope>NOMENCLATURE</scope>
    <scope>TISSUE SPECIFICITY</scope>
    <scope>INDUCTION</scope>
</reference>
<reference key="6">
    <citation type="journal article" date="2006" name="Plant Cell">
        <title>An Arabidopsis glutathione peroxidase functions as both a redox transducer and a scavenger in abscisic acid and drought stress responses.</title>
        <authorList>
            <person name="Miao Y."/>
            <person name="Lv D."/>
            <person name="Wang P."/>
            <person name="Wang X.-C."/>
            <person name="Chen J."/>
            <person name="Miao C."/>
            <person name="Song C.-P."/>
        </authorList>
    </citation>
    <scope>FUNCTION</scope>
    <scope>ACTIVITY REGULATION</scope>
    <scope>INDUCTION</scope>
    <scope>INTERACTION WITH ABI1 AND ABI2</scope>
    <scope>DISRUPTION PHENOTYPE</scope>
</reference>
<accession>O22850</accession>
<protein>
    <recommendedName>
        <fullName>Probable glutathione peroxidase 3, mitochondrial</fullName>
        <ecNumber>1.11.1.9</ecNumber>
    </recommendedName>
</protein>
<organism>
    <name type="scientific">Arabidopsis thaliana</name>
    <name type="common">Mouse-ear cress</name>
    <dbReference type="NCBI Taxonomy" id="3702"/>
    <lineage>
        <taxon>Eukaryota</taxon>
        <taxon>Viridiplantae</taxon>
        <taxon>Streptophyta</taxon>
        <taxon>Embryophyta</taxon>
        <taxon>Tracheophyta</taxon>
        <taxon>Spermatophyta</taxon>
        <taxon>Magnoliopsida</taxon>
        <taxon>eudicotyledons</taxon>
        <taxon>Gunneridae</taxon>
        <taxon>Pentapetalae</taxon>
        <taxon>rosids</taxon>
        <taxon>malvids</taxon>
        <taxon>Brassicales</taxon>
        <taxon>Brassicaceae</taxon>
        <taxon>Camelineae</taxon>
        <taxon>Arabidopsis</taxon>
    </lineage>
</organism>